<sequence length="333" mass="36128">MMLILSILSIIAFAAASPVPSIDENIRVLEHRAVTVTTQDLSNFRFYLQHADAAYCNFNTAVGKPVHCGAGNCPDVEKDSAIVVGSVVGTKTGIGAYVATDNARKEIVVSVRGSINVRNWITNFNFGQKTCDLVAGCGVHTGFLEAWEEVAANIKAAVSAAKTANPTFKFVVTGHSLGGAVATVAAAYLRKDGFPFDLYTYGSPRVGNDFFANFVTQQTGAEYRVTHGDDPVPRLPPIVFGYRHTSPEYWLDGGPLDKDYTVSEIKVCDGIANVMCNGGTIGLDILAHITYFQSMATCAPIAIPWKRDMSDEELDKKLTQYSEMDQEFVKQMT</sequence>
<evidence type="ECO:0000250" key="1">
    <source>
        <dbReference type="UniProtKB" id="A8PUY1"/>
    </source>
</evidence>
<evidence type="ECO:0000255" key="2"/>
<evidence type="ECO:0000255" key="3">
    <source>
        <dbReference type="PROSITE-ProRule" id="PRU10037"/>
    </source>
</evidence>
<evidence type="ECO:0000269" key="4">
    <source>
    </source>
</evidence>
<evidence type="ECO:0000303" key="5">
    <source>
    </source>
</evidence>
<evidence type="ECO:0000305" key="6"/>
<evidence type="ECO:0000305" key="7">
    <source>
    </source>
</evidence>
<dbReference type="EC" id="3.1.1.-" evidence="4"/>
<dbReference type="EMBL" id="AJ271094">
    <property type="protein sequence ID" value="CAC19602.1"/>
    <property type="molecule type" value="Genomic_DNA"/>
</dbReference>
<dbReference type="SMR" id="Q9HE20"/>
<dbReference type="ESTHER" id="fushe-LIPASE">
    <property type="family name" value="Lipase_3"/>
</dbReference>
<dbReference type="VEuPathDB" id="FungiDB:B0J15DRAFT_433722"/>
<dbReference type="GO" id="GO:0005576">
    <property type="term" value="C:extracellular region"/>
    <property type="evidence" value="ECO:0007669"/>
    <property type="project" value="UniProtKB-SubCell"/>
</dbReference>
<dbReference type="GO" id="GO:0016787">
    <property type="term" value="F:hydrolase activity"/>
    <property type="evidence" value="ECO:0007669"/>
    <property type="project" value="UniProtKB-KW"/>
</dbReference>
<dbReference type="GO" id="GO:0046872">
    <property type="term" value="F:metal ion binding"/>
    <property type="evidence" value="ECO:0007669"/>
    <property type="project" value="UniProtKB-KW"/>
</dbReference>
<dbReference type="GO" id="GO:0016042">
    <property type="term" value="P:lipid catabolic process"/>
    <property type="evidence" value="ECO:0007669"/>
    <property type="project" value="UniProtKB-KW"/>
</dbReference>
<dbReference type="CDD" id="cd00519">
    <property type="entry name" value="Lipase_3"/>
    <property type="match status" value="1"/>
</dbReference>
<dbReference type="Gene3D" id="3.40.50.1820">
    <property type="entry name" value="alpha/beta hydrolase"/>
    <property type="match status" value="1"/>
</dbReference>
<dbReference type="InterPro" id="IPR029058">
    <property type="entry name" value="AB_hydrolase_fold"/>
</dbReference>
<dbReference type="InterPro" id="IPR002921">
    <property type="entry name" value="Fungal_lipase-type"/>
</dbReference>
<dbReference type="InterPro" id="IPR051218">
    <property type="entry name" value="Sec_MonoDiacylglyc_Lipase"/>
</dbReference>
<dbReference type="PANTHER" id="PTHR45856">
    <property type="entry name" value="ALPHA/BETA-HYDROLASES SUPERFAMILY PROTEIN"/>
    <property type="match status" value="1"/>
</dbReference>
<dbReference type="PANTHER" id="PTHR45856:SF11">
    <property type="entry name" value="FUNGAL LIPASE-LIKE DOMAIN-CONTAINING PROTEIN"/>
    <property type="match status" value="1"/>
</dbReference>
<dbReference type="Pfam" id="PF01764">
    <property type="entry name" value="Lipase_3"/>
    <property type="match status" value="1"/>
</dbReference>
<dbReference type="SUPFAM" id="SSF53474">
    <property type="entry name" value="alpha/beta-Hydrolases"/>
    <property type="match status" value="1"/>
</dbReference>
<proteinExistence type="evidence at protein level"/>
<organism>
    <name type="scientific">Fusarium solani</name>
    <name type="common">Filamentous fungus</name>
    <dbReference type="NCBI Taxonomy" id="169388"/>
    <lineage>
        <taxon>Eukaryota</taxon>
        <taxon>Fungi</taxon>
        <taxon>Dikarya</taxon>
        <taxon>Ascomycota</taxon>
        <taxon>Pezizomycotina</taxon>
        <taxon>Sordariomycetes</taxon>
        <taxon>Hypocreomycetidae</taxon>
        <taxon>Hypocreales</taxon>
        <taxon>Nectriaceae</taxon>
        <taxon>Fusarium</taxon>
        <taxon>Fusarium solani species complex</taxon>
    </lineage>
</organism>
<keyword id="KW-1015">Disulfide bond</keyword>
<keyword id="KW-0378">Hydrolase</keyword>
<keyword id="KW-0442">Lipid degradation</keyword>
<keyword id="KW-0443">Lipid metabolism</keyword>
<keyword id="KW-0479">Metal-binding</keyword>
<keyword id="KW-0964">Secreted</keyword>
<keyword id="KW-0732">Signal</keyword>
<keyword id="KW-0843">Virulence</keyword>
<protein>
    <recommendedName>
        <fullName evidence="5">Secreted mono- and diacylglycerol lipase 1</fullName>
        <ecNumber evidence="4">3.1.1.-</ecNumber>
    </recommendedName>
</protein>
<comment type="function">
    <text evidence="4">Secreted mono- and diacylglycerol lipase that allows the use of hydrolyzed lipids as carbon source and might play a role in pathogenicity (PubMed:11361331). Shows lipolytic activity towards olive oil and p-nitrophenylpalmitate (PubMed:11361331).</text>
</comment>
<comment type="catalytic activity">
    <reaction evidence="7">
        <text>a monoacylglycerol + H2O = glycerol + a fatty acid + H(+)</text>
        <dbReference type="Rhea" id="RHEA:15245"/>
        <dbReference type="ChEBI" id="CHEBI:15377"/>
        <dbReference type="ChEBI" id="CHEBI:15378"/>
        <dbReference type="ChEBI" id="CHEBI:17408"/>
        <dbReference type="ChEBI" id="CHEBI:17754"/>
        <dbReference type="ChEBI" id="CHEBI:28868"/>
    </reaction>
</comment>
<comment type="catalytic activity">
    <reaction evidence="7">
        <text>a diacylglycerol + H2O = a monoacylglycerol + a fatty acid + H(+)</text>
        <dbReference type="Rhea" id="RHEA:32731"/>
        <dbReference type="ChEBI" id="CHEBI:15377"/>
        <dbReference type="ChEBI" id="CHEBI:15378"/>
        <dbReference type="ChEBI" id="CHEBI:17408"/>
        <dbReference type="ChEBI" id="CHEBI:18035"/>
        <dbReference type="ChEBI" id="CHEBI:28868"/>
    </reaction>
</comment>
<comment type="biophysicochemical properties">
    <phDependence>
        <text evidence="4">Optimum pH is 8.0.</text>
    </phDependence>
    <temperatureDependence>
        <text evidence="4">Optimum temperature is 37 degrees Celsius.</text>
    </temperatureDependence>
</comment>
<comment type="subcellular location">
    <subcellularLocation>
        <location evidence="4">Secreted</location>
    </subcellularLocation>
</comment>
<comment type="induction">
    <text evidence="4">Shows a low basal expression, but is highly inducible by lipase substrates such as olive oil, and repressed by glucose (PubMed:11361331). During plant infection, transcripts are detected 4, 8, and 10 days after infection (PubMed:11361331).</text>
</comment>
<comment type="similarity">
    <text evidence="6">Belongs to the AB hydrolase superfamily. Lipase family. Class 3 subfamily.</text>
</comment>
<reference key="1">
    <citation type="journal article" date="2001" name="Mol. Genet. Genomics">
        <title>Cloning and expression analysis of NhL1, a gene encoding an extracellular lipase from the fungal pea pathogen Nectria haematococca MP VI (Fusarium solani f. sp. pisi) that is expressed in planta.</title>
        <authorList>
            <person name="Nasser Eddine A."/>
            <person name="Hannemann F."/>
            <person name="Schaefer W."/>
        </authorList>
    </citation>
    <scope>NUCLEOTIDE SEQUENCE [GENOMIC DNA]</scope>
    <scope>FUNCTION</scope>
    <scope>CATALYTIC ACTIVITY</scope>
    <scope>BIOPHYSICOCHEMICAL PROPERTIES</scope>
    <scope>SUBCELLULAR LOCATION</scope>
    <scope>INDUCTION</scope>
</reference>
<accession>Q9HE20</accession>
<name>NHL1_FUSSL</name>
<gene>
    <name evidence="5" type="primary">NHL1</name>
</gene>
<feature type="signal peptide" evidence="2">
    <location>
        <begin position="1"/>
        <end position="16"/>
    </location>
</feature>
<feature type="chain" id="PRO_5004327971" description="Secreted mono- and diacylglycerol lipase 1">
    <location>
        <begin position="17"/>
        <end position="333"/>
    </location>
</feature>
<feature type="active site" description="Nucleophile" evidence="3">
    <location>
        <position position="176"/>
    </location>
</feature>
<feature type="active site" evidence="1">
    <location>
        <position position="230"/>
    </location>
</feature>
<feature type="active site" evidence="1">
    <location>
        <position position="288"/>
    </location>
</feature>
<feature type="disulfide bond" evidence="7">
    <location>
        <begin position="56"/>
        <end position="268"/>
    </location>
</feature>
<feature type="disulfide bond" evidence="7">
    <location>
        <begin position="276"/>
        <end position="298"/>
    </location>
</feature>